<organism>
    <name type="scientific">Pseudomonas aeruginosa (strain ATCC 15692 / DSM 22644 / CIP 104116 / JCM 14847 / LMG 12228 / 1C / PRS 101 / PAO1)</name>
    <dbReference type="NCBI Taxonomy" id="208964"/>
    <lineage>
        <taxon>Bacteria</taxon>
        <taxon>Pseudomonadati</taxon>
        <taxon>Pseudomonadota</taxon>
        <taxon>Gammaproteobacteria</taxon>
        <taxon>Pseudomonadales</taxon>
        <taxon>Pseudomonadaceae</taxon>
        <taxon>Pseudomonas</taxon>
    </lineage>
</organism>
<reference key="1">
    <citation type="journal article" date="2000" name="Nature">
        <title>Complete genome sequence of Pseudomonas aeruginosa PAO1, an opportunistic pathogen.</title>
        <authorList>
            <person name="Stover C.K."/>
            <person name="Pham X.-Q.T."/>
            <person name="Erwin A.L."/>
            <person name="Mizoguchi S.D."/>
            <person name="Warrener P."/>
            <person name="Hickey M.J."/>
            <person name="Brinkman F.S.L."/>
            <person name="Hufnagle W.O."/>
            <person name="Kowalik D.J."/>
            <person name="Lagrou M."/>
            <person name="Garber R.L."/>
            <person name="Goltry L."/>
            <person name="Tolentino E."/>
            <person name="Westbrock-Wadman S."/>
            <person name="Yuan Y."/>
            <person name="Brody L.L."/>
            <person name="Coulter S.N."/>
            <person name="Folger K.R."/>
            <person name="Kas A."/>
            <person name="Larbig K."/>
            <person name="Lim R.M."/>
            <person name="Smith K.A."/>
            <person name="Spencer D.H."/>
            <person name="Wong G.K.-S."/>
            <person name="Wu Z."/>
            <person name="Paulsen I.T."/>
            <person name="Reizer J."/>
            <person name="Saier M.H. Jr."/>
            <person name="Hancock R.E.W."/>
            <person name="Lory S."/>
            <person name="Olson M.V."/>
        </authorList>
    </citation>
    <scope>NUCLEOTIDE SEQUENCE [LARGE SCALE GENOMIC DNA]</scope>
    <source>
        <strain>ATCC 15692 / DSM 22644 / CIP 104116 / JCM 14847 / LMG 12228 / 1C / PRS 101 / PAO1</strain>
    </source>
</reference>
<reference key="2">
    <citation type="journal article" date="2012" name="J. Biol. Chem.">
        <title>Biochemical and structural studies of uncharacterized protein PA0743 from Pseudomonas aeruginosa revealed NAD+-dependent L-serine dehydrogenase.</title>
        <authorList>
            <person name="Tchigvintsev A."/>
            <person name="Singer A."/>
            <person name="Brown G."/>
            <person name="Flick R."/>
            <person name="Evdokimova E."/>
            <person name="Tan K."/>
            <person name="Gonzalez C.F."/>
            <person name="Savchenko A."/>
            <person name="Yakunin A.F."/>
        </authorList>
    </citation>
    <scope>X-RAY CRYSTALLOGRAPHY (2.20 ANGSTROMS) IN COMPLEX WITH NAD</scope>
    <scope>FUNCTION</scope>
    <scope>CATALYTIC ACTIVITY</scope>
    <scope>BIOPHYSICOCHEMICAL PROPERTIES</scope>
    <scope>SUBUNIT</scope>
    <scope>ACTIVE SITE</scope>
    <scope>MUTAGENESIS OF THR-96; SER-122; ASN-175; TRP-214; TYR-219; LYS-246 AND ASP-247</scope>
    <source>
        <strain>ATCC 15692 / DSM 22644 / CIP 104116 / JCM 14847 / LMG 12228 / 1C / PRS 101 / PAO1</strain>
    </source>
</reference>
<proteinExistence type="evidence at protein level"/>
<gene>
    <name type="ordered locus">PA0743</name>
</gene>
<keyword id="KW-0002">3D-structure</keyword>
<keyword id="KW-0101">Branched-chain amino acid catabolism</keyword>
<keyword id="KW-0520">NAD</keyword>
<keyword id="KW-0547">Nucleotide-binding</keyword>
<keyword id="KW-0560">Oxidoreductase</keyword>
<keyword id="KW-1185">Reference proteome</keyword>
<sequence>MKQIAFIGLGHMGAPMATNLLKAGYLLNVFDLVQSAVDGLVAAGASAARSARDAVQGADVVISMLPASQHVEGLYLDDDGLLAHIAPGTLVLECSTIAPTSARKIHAAARERGLAMLDAPVSGGTAGAAAGTLTFMVGGDAEALEKARPLFEAMGRNIFHAGPDGAGQVAKVCNNQLLAVLMIGTAEAMALGVANGLEAKVLAEIMRRSSGGNWALEVYNPWPGVMENAPASRDYSGGFMAQLMAKDLGLAQEAAQASASSTPMGSLALSLYRLLLKQGYAERDFSVVQKLFDPTQGQ</sequence>
<accession>Q9I5I6</accession>
<protein>
    <recommendedName>
        <fullName>NAD-dependent L-serine dehydrogenase</fullName>
        <ecNumber evidence="2">1.1.1.387</ecNumber>
    </recommendedName>
    <alternativeName>
        <fullName>L-serine 3-dehydrogenase (NAD(+))</fullName>
    </alternativeName>
</protein>
<comment type="function">
    <text evidence="2">NAD-dependent L-serine dehydrogenase that catalyzes the oxidation of L-serine and methyl-L-serine and is possibly involved in serine catabolism. Has low activity toward beta-hydroxyisobutyrate.</text>
</comment>
<comment type="catalytic activity">
    <reaction evidence="2">
        <text>L-serine + NAD(+) = aminoacetaldehyde + CO2 + NADH</text>
        <dbReference type="Rhea" id="RHEA:43628"/>
        <dbReference type="ChEBI" id="CHEBI:16526"/>
        <dbReference type="ChEBI" id="CHEBI:33384"/>
        <dbReference type="ChEBI" id="CHEBI:57540"/>
        <dbReference type="ChEBI" id="CHEBI:57945"/>
        <dbReference type="ChEBI" id="CHEBI:58213"/>
        <dbReference type="EC" id="1.1.1.387"/>
    </reaction>
</comment>
<comment type="biophysicochemical properties">
    <kinetics>
        <KM evidence="2">2.5 mM for L-serine</KM>
        <KM evidence="2">2.4 mM for methyl-DL-serine</KM>
        <KM evidence="2">19.8 mM for DL-glycerate</KM>
        <KM evidence="2">17.4 mM for methyl-2,2-dimethyl-3-hydroxypropionate</KM>
        <KM evidence="2">3.4 mM for NAD</KM>
        <Vmax evidence="2">18.7 umol/min/mg enzyme with L-serine as substrate</Vmax>
        <Vmax evidence="2">17.2 umol/min/mg enzyme with methyl-DL-serine as substrate</Vmax>
        <Vmax evidence="2">10.4 umol/min/mg enzyme with DL-glycerate as substrate</Vmax>
        <Vmax evidence="2">20.9 umol/min/mg enzyme with methyl-2,2-dimethyl-3-hydroxypropionate as substrate</Vmax>
        <Vmax evidence="2">2.8 umol/min/mg enzyme with NAD as substrate</Vmax>
        <text>kcat is 10.4 sec(-1) with L-serine as substrate. kcat is 9.6 sec(-1) with methyl-DL-serine as substrate. kcat is 5.8 sec(-1) with DL-glycerate as substrate. kcat is 11.6 sec(-1) with methyl-2,2-dimethyl-3-hydroxypropionate as substrate. kcat is 1.6 sec(-1) with NAD as substrate.</text>
    </kinetics>
</comment>
<comment type="pathway">
    <text>Amino-acid degradation.</text>
</comment>
<comment type="subunit">
    <text evidence="2">Homotetramer, dimer of dimers.</text>
</comment>
<comment type="similarity">
    <text evidence="3">Belongs to the HIBADH-related family.</text>
</comment>
<evidence type="ECO:0000250" key="1"/>
<evidence type="ECO:0000269" key="2">
    <source>
    </source>
</evidence>
<evidence type="ECO:0000305" key="3"/>
<evidence type="ECO:0007829" key="4">
    <source>
        <dbReference type="PDB" id="3OBB"/>
    </source>
</evidence>
<name>SERDH_PSEAE</name>
<feature type="chain" id="PRO_0000429132" description="NAD-dependent L-serine dehydrogenase">
    <location>
        <begin position="1"/>
        <end position="298"/>
    </location>
</feature>
<feature type="active site" evidence="2">
    <location>
        <position position="171"/>
    </location>
</feature>
<feature type="binding site" evidence="2">
    <location>
        <begin position="2"/>
        <end position="31"/>
    </location>
    <ligand>
        <name>NAD(+)</name>
        <dbReference type="ChEBI" id="CHEBI:57540"/>
    </ligand>
</feature>
<feature type="binding site" evidence="1">
    <location>
        <begin position="65"/>
        <end position="66"/>
    </location>
    <ligand>
        <name>NAD(+)</name>
        <dbReference type="ChEBI" id="CHEBI:57540"/>
    </ligand>
</feature>
<feature type="binding site" evidence="2">
    <location>
        <position position="66"/>
    </location>
    <ligand>
        <name>NAD(+)</name>
        <dbReference type="ChEBI" id="CHEBI:57540"/>
    </ligand>
</feature>
<feature type="binding site" evidence="2">
    <location>
        <position position="96"/>
    </location>
    <ligand>
        <name>NAD(+)</name>
        <dbReference type="ChEBI" id="CHEBI:57540"/>
    </ligand>
</feature>
<feature type="binding site" evidence="2">
    <location>
        <position position="246"/>
    </location>
    <ligand>
        <name>NAD(+)</name>
        <dbReference type="ChEBI" id="CHEBI:57540"/>
    </ligand>
</feature>
<feature type="mutagenesis site" description="Almost abolished activity." evidence="2">
    <original>T</original>
    <variation>A</variation>
    <location>
        <position position="96"/>
    </location>
</feature>
<feature type="mutagenesis site" description="Strongly reduced activity." evidence="2">
    <original>S</original>
    <variation>A</variation>
    <location>
        <position position="122"/>
    </location>
</feature>
<feature type="mutagenesis site" description="Strongly reduced activity.">
    <original>K</original>
    <variation>A</variation>
    <location>
        <position position="171"/>
    </location>
</feature>
<feature type="mutagenesis site" description="Strongly reduced activity." evidence="2">
    <original>N</original>
    <variation>A</variation>
    <location>
        <position position="175"/>
    </location>
</feature>
<feature type="mutagenesis site" description="Almost abolished activity." evidence="2">
    <original>W</original>
    <variation>A</variation>
    <location>
        <position position="214"/>
    </location>
</feature>
<feature type="mutagenesis site" description="Strongly reduced activity." evidence="2">
    <original>Y</original>
    <variation>A</variation>
    <location>
        <position position="219"/>
    </location>
</feature>
<feature type="mutagenesis site" description="Almost abolished activity." evidence="2">
    <original>K</original>
    <variation>A</variation>
    <location>
        <position position="246"/>
    </location>
</feature>
<feature type="mutagenesis site" description="Almost abolished activity." evidence="2">
    <original>D</original>
    <variation>A</variation>
    <location>
        <position position="247"/>
    </location>
</feature>
<feature type="strand" evidence="4">
    <location>
        <begin position="3"/>
        <end position="7"/>
    </location>
</feature>
<feature type="helix" evidence="4">
    <location>
        <begin position="13"/>
        <end position="22"/>
    </location>
</feature>
<feature type="strand" evidence="4">
    <location>
        <begin position="26"/>
        <end position="30"/>
    </location>
</feature>
<feature type="helix" evidence="4">
    <location>
        <begin position="34"/>
        <end position="42"/>
    </location>
</feature>
<feature type="helix" evidence="4">
    <location>
        <begin position="51"/>
        <end position="55"/>
    </location>
</feature>
<feature type="strand" evidence="4">
    <location>
        <begin position="59"/>
        <end position="63"/>
    </location>
</feature>
<feature type="helix" evidence="4">
    <location>
        <begin position="68"/>
        <end position="76"/>
    </location>
</feature>
<feature type="strand" evidence="4">
    <location>
        <begin position="77"/>
        <end position="81"/>
    </location>
</feature>
<feature type="strand" evidence="4">
    <location>
        <begin position="90"/>
        <end position="93"/>
    </location>
</feature>
<feature type="helix" evidence="4">
    <location>
        <begin position="99"/>
        <end position="110"/>
    </location>
</feature>
<feature type="turn" evidence="4">
    <location>
        <begin position="111"/>
        <end position="113"/>
    </location>
</feature>
<feature type="strand" evidence="4">
    <location>
        <begin position="115"/>
        <end position="118"/>
    </location>
</feature>
<feature type="strand" evidence="4">
    <location>
        <begin position="121"/>
        <end position="123"/>
    </location>
</feature>
<feature type="helix" evidence="4">
    <location>
        <begin position="125"/>
        <end position="130"/>
    </location>
</feature>
<feature type="strand" evidence="4">
    <location>
        <begin position="133"/>
        <end position="139"/>
    </location>
</feature>
<feature type="helix" evidence="4">
    <location>
        <begin position="141"/>
        <end position="154"/>
    </location>
</feature>
<feature type="strand" evidence="4">
    <location>
        <begin position="155"/>
        <end position="163"/>
    </location>
</feature>
<feature type="helix" evidence="4">
    <location>
        <begin position="166"/>
        <end position="194"/>
    </location>
</feature>
<feature type="helix" evidence="4">
    <location>
        <begin position="199"/>
        <end position="207"/>
    </location>
</feature>
<feature type="helix" evidence="4">
    <location>
        <begin position="214"/>
        <end position="218"/>
    </location>
</feature>
<feature type="turn" evidence="4">
    <location>
        <begin position="223"/>
        <end position="225"/>
    </location>
</feature>
<feature type="helix" evidence="4">
    <location>
        <begin position="230"/>
        <end position="233"/>
    </location>
</feature>
<feature type="strand" evidence="4">
    <location>
        <begin position="237"/>
        <end position="240"/>
    </location>
</feature>
<feature type="helix" evidence="4">
    <location>
        <begin position="241"/>
        <end position="258"/>
    </location>
</feature>
<feature type="helix" evidence="4">
    <location>
        <begin position="263"/>
        <end position="277"/>
    </location>
</feature>
<feature type="helix" evidence="4">
    <location>
        <begin position="285"/>
        <end position="288"/>
    </location>
</feature>
<feature type="helix" evidence="4">
    <location>
        <begin position="289"/>
        <end position="292"/>
    </location>
</feature>
<dbReference type="EC" id="1.1.1.387" evidence="2"/>
<dbReference type="EMBL" id="AE004091">
    <property type="protein sequence ID" value="AAG04132.1"/>
    <property type="molecule type" value="Genomic_DNA"/>
</dbReference>
<dbReference type="PIR" id="B83553">
    <property type="entry name" value="B83553"/>
</dbReference>
<dbReference type="RefSeq" id="NP_249434.1">
    <property type="nucleotide sequence ID" value="NC_002516.2"/>
</dbReference>
<dbReference type="PDB" id="3OBB">
    <property type="method" value="X-ray"/>
    <property type="resolution" value="2.20 A"/>
    <property type="chains" value="A=1-298"/>
</dbReference>
<dbReference type="PDB" id="3Q3C">
    <property type="method" value="X-ray"/>
    <property type="resolution" value="2.30 A"/>
    <property type="chains" value="A=1-298"/>
</dbReference>
<dbReference type="PDBsum" id="3OBB"/>
<dbReference type="PDBsum" id="3Q3C"/>
<dbReference type="SMR" id="Q9I5I6"/>
<dbReference type="STRING" id="208964.PA0743"/>
<dbReference type="PaxDb" id="208964-PA0743"/>
<dbReference type="GeneID" id="882135"/>
<dbReference type="KEGG" id="pae:PA0743"/>
<dbReference type="PATRIC" id="fig|208964.12.peg.772"/>
<dbReference type="PseudoCAP" id="PA0743"/>
<dbReference type="HOGENOM" id="CLU_035117_6_0_6"/>
<dbReference type="InParanoid" id="Q9I5I6"/>
<dbReference type="OrthoDB" id="9786703at2"/>
<dbReference type="PhylomeDB" id="Q9I5I6"/>
<dbReference type="BioCyc" id="PAER208964:G1FZ6-756-MONOMER"/>
<dbReference type="BRENDA" id="1.1.1.387">
    <property type="organism ID" value="5087"/>
</dbReference>
<dbReference type="SABIO-RK" id="Q9I5I6"/>
<dbReference type="EvolutionaryTrace" id="Q9I5I6"/>
<dbReference type="Proteomes" id="UP000002438">
    <property type="component" value="Chromosome"/>
</dbReference>
<dbReference type="GO" id="GO:0008442">
    <property type="term" value="F:3-hydroxyisobutyrate dehydrogenase activity"/>
    <property type="evidence" value="ECO:0007669"/>
    <property type="project" value="InterPro"/>
</dbReference>
<dbReference type="GO" id="GO:0051287">
    <property type="term" value="F:NAD binding"/>
    <property type="evidence" value="ECO:0007669"/>
    <property type="project" value="InterPro"/>
</dbReference>
<dbReference type="GO" id="GO:0050661">
    <property type="term" value="F:NADP binding"/>
    <property type="evidence" value="ECO:0007669"/>
    <property type="project" value="InterPro"/>
</dbReference>
<dbReference type="GO" id="GO:0016616">
    <property type="term" value="F:oxidoreductase activity, acting on the CH-OH group of donors, NAD or NADP as acceptor"/>
    <property type="evidence" value="ECO:0000314"/>
    <property type="project" value="UniProtKB"/>
</dbReference>
<dbReference type="GO" id="GO:0009083">
    <property type="term" value="P:branched-chain amino acid catabolic process"/>
    <property type="evidence" value="ECO:0007669"/>
    <property type="project" value="UniProtKB-KW"/>
</dbReference>
<dbReference type="GO" id="GO:0006565">
    <property type="term" value="P:L-serine catabolic process"/>
    <property type="evidence" value="ECO:0000304"/>
    <property type="project" value="UniProtKB"/>
</dbReference>
<dbReference type="GO" id="GO:0051289">
    <property type="term" value="P:protein homotetramerization"/>
    <property type="evidence" value="ECO:0000314"/>
    <property type="project" value="UniProtKB"/>
</dbReference>
<dbReference type="FunFam" id="3.40.50.720:FF:000071">
    <property type="entry name" value="2-hydroxy-3-oxopropionate reductase"/>
    <property type="match status" value="1"/>
</dbReference>
<dbReference type="FunFam" id="1.10.1040.10:FF:000006">
    <property type="entry name" value="3-hydroxyisobutyrate dehydrogenase"/>
    <property type="match status" value="1"/>
</dbReference>
<dbReference type="Gene3D" id="1.10.1040.10">
    <property type="entry name" value="N-(1-d-carboxylethyl)-l-norvaline Dehydrogenase, domain 2"/>
    <property type="match status" value="1"/>
</dbReference>
<dbReference type="Gene3D" id="3.40.50.720">
    <property type="entry name" value="NAD(P)-binding Rossmann-like Domain"/>
    <property type="match status" value="1"/>
</dbReference>
<dbReference type="InterPro" id="IPR002204">
    <property type="entry name" value="3-OH-isobutyrate_DH-rel_CS"/>
</dbReference>
<dbReference type="InterPro" id="IPR008927">
    <property type="entry name" value="6-PGluconate_DH-like_C_sf"/>
</dbReference>
<dbReference type="InterPro" id="IPR013328">
    <property type="entry name" value="6PGD_dom2"/>
</dbReference>
<dbReference type="InterPro" id="IPR006115">
    <property type="entry name" value="6PGDH_NADP-bd"/>
</dbReference>
<dbReference type="InterPro" id="IPR011548">
    <property type="entry name" value="HIBADH"/>
</dbReference>
<dbReference type="InterPro" id="IPR029154">
    <property type="entry name" value="HIBADH-like_NADP-bd"/>
</dbReference>
<dbReference type="InterPro" id="IPR015815">
    <property type="entry name" value="HIBADH-related"/>
</dbReference>
<dbReference type="InterPro" id="IPR036291">
    <property type="entry name" value="NAD(P)-bd_dom_sf"/>
</dbReference>
<dbReference type="NCBIfam" id="TIGR01692">
    <property type="entry name" value="HIBADH"/>
    <property type="match status" value="1"/>
</dbReference>
<dbReference type="PANTHER" id="PTHR22981:SF7">
    <property type="entry name" value="3-HYDROXYISOBUTYRATE DEHYDROGENASE, MITOCHONDRIAL"/>
    <property type="match status" value="1"/>
</dbReference>
<dbReference type="PANTHER" id="PTHR22981">
    <property type="entry name" value="3-HYDROXYISOBUTYRATE DEHYDROGENASE-RELATED"/>
    <property type="match status" value="1"/>
</dbReference>
<dbReference type="Pfam" id="PF14833">
    <property type="entry name" value="NAD_binding_11"/>
    <property type="match status" value="1"/>
</dbReference>
<dbReference type="Pfam" id="PF03446">
    <property type="entry name" value="NAD_binding_2"/>
    <property type="match status" value="1"/>
</dbReference>
<dbReference type="PIRSF" id="PIRSF000103">
    <property type="entry name" value="HIBADH"/>
    <property type="match status" value="1"/>
</dbReference>
<dbReference type="SUPFAM" id="SSF48179">
    <property type="entry name" value="6-phosphogluconate dehydrogenase C-terminal domain-like"/>
    <property type="match status" value="1"/>
</dbReference>
<dbReference type="SUPFAM" id="SSF51735">
    <property type="entry name" value="NAD(P)-binding Rossmann-fold domains"/>
    <property type="match status" value="1"/>
</dbReference>
<dbReference type="PROSITE" id="PS00895">
    <property type="entry name" value="3_HYDROXYISOBUT_DH"/>
    <property type="match status" value="1"/>
</dbReference>